<gene>
    <name evidence="1" type="primary">rpmG2</name>
    <name type="ordered locus">BCE_4346</name>
</gene>
<dbReference type="EMBL" id="AE017194">
    <property type="protein sequence ID" value="AAS43247.1"/>
    <property type="molecule type" value="Genomic_DNA"/>
</dbReference>
<dbReference type="SMR" id="Q730S0"/>
<dbReference type="KEGG" id="bca:BCE_4346"/>
<dbReference type="HOGENOM" id="CLU_190949_0_2_9"/>
<dbReference type="Proteomes" id="UP000002527">
    <property type="component" value="Chromosome"/>
</dbReference>
<dbReference type="GO" id="GO:0005737">
    <property type="term" value="C:cytoplasm"/>
    <property type="evidence" value="ECO:0007669"/>
    <property type="project" value="UniProtKB-ARBA"/>
</dbReference>
<dbReference type="GO" id="GO:1990904">
    <property type="term" value="C:ribonucleoprotein complex"/>
    <property type="evidence" value="ECO:0007669"/>
    <property type="project" value="UniProtKB-KW"/>
</dbReference>
<dbReference type="GO" id="GO:0005840">
    <property type="term" value="C:ribosome"/>
    <property type="evidence" value="ECO:0007669"/>
    <property type="project" value="UniProtKB-KW"/>
</dbReference>
<dbReference type="GO" id="GO:0003735">
    <property type="term" value="F:structural constituent of ribosome"/>
    <property type="evidence" value="ECO:0007669"/>
    <property type="project" value="InterPro"/>
</dbReference>
<dbReference type="GO" id="GO:0006412">
    <property type="term" value="P:translation"/>
    <property type="evidence" value="ECO:0007669"/>
    <property type="project" value="UniProtKB-UniRule"/>
</dbReference>
<dbReference type="Gene3D" id="2.20.28.120">
    <property type="entry name" value="Ribosomal protein L33"/>
    <property type="match status" value="1"/>
</dbReference>
<dbReference type="HAMAP" id="MF_00294">
    <property type="entry name" value="Ribosomal_bL33"/>
    <property type="match status" value="1"/>
</dbReference>
<dbReference type="InterPro" id="IPR001705">
    <property type="entry name" value="Ribosomal_bL33"/>
</dbReference>
<dbReference type="InterPro" id="IPR018264">
    <property type="entry name" value="Ribosomal_bL33_CS"/>
</dbReference>
<dbReference type="InterPro" id="IPR038584">
    <property type="entry name" value="Ribosomal_bL33_sf"/>
</dbReference>
<dbReference type="InterPro" id="IPR011332">
    <property type="entry name" value="Ribosomal_zn-bd"/>
</dbReference>
<dbReference type="NCBIfam" id="NF001764">
    <property type="entry name" value="PRK00504.1"/>
    <property type="match status" value="1"/>
</dbReference>
<dbReference type="NCBIfam" id="NF001860">
    <property type="entry name" value="PRK00595.1"/>
    <property type="match status" value="1"/>
</dbReference>
<dbReference type="NCBIfam" id="TIGR01023">
    <property type="entry name" value="rpmG_bact"/>
    <property type="match status" value="1"/>
</dbReference>
<dbReference type="PANTHER" id="PTHR43168">
    <property type="entry name" value="50S RIBOSOMAL PROTEIN L33, CHLOROPLASTIC"/>
    <property type="match status" value="1"/>
</dbReference>
<dbReference type="PANTHER" id="PTHR43168:SF2">
    <property type="entry name" value="LARGE RIBOSOMAL SUBUNIT PROTEIN BL33C"/>
    <property type="match status" value="1"/>
</dbReference>
<dbReference type="Pfam" id="PF00471">
    <property type="entry name" value="Ribosomal_L33"/>
    <property type="match status" value="1"/>
</dbReference>
<dbReference type="SUPFAM" id="SSF57829">
    <property type="entry name" value="Zn-binding ribosomal proteins"/>
    <property type="match status" value="1"/>
</dbReference>
<dbReference type="PROSITE" id="PS00582">
    <property type="entry name" value="RIBOSOMAL_L33"/>
    <property type="match status" value="1"/>
</dbReference>
<sequence length="49" mass="5886">MRVNITLACTECGDRNYISKKNKRNNAERIELKKYCKRDKKSTLHRETK</sequence>
<accession>Q730S0</accession>
<protein>
    <recommendedName>
        <fullName evidence="1">Large ribosomal subunit protein bL33B</fullName>
    </recommendedName>
    <alternativeName>
        <fullName evidence="1">50S ribosomal protein L33 2</fullName>
    </alternativeName>
</protein>
<organism>
    <name type="scientific">Bacillus cereus (strain ATCC 10987 / NRS 248)</name>
    <dbReference type="NCBI Taxonomy" id="222523"/>
    <lineage>
        <taxon>Bacteria</taxon>
        <taxon>Bacillati</taxon>
        <taxon>Bacillota</taxon>
        <taxon>Bacilli</taxon>
        <taxon>Bacillales</taxon>
        <taxon>Bacillaceae</taxon>
        <taxon>Bacillus</taxon>
        <taxon>Bacillus cereus group</taxon>
    </lineage>
</organism>
<name>RL332_BACC1</name>
<proteinExistence type="inferred from homology"/>
<keyword id="KW-0687">Ribonucleoprotein</keyword>
<keyword id="KW-0689">Ribosomal protein</keyword>
<reference key="1">
    <citation type="journal article" date="2004" name="Nucleic Acids Res.">
        <title>The genome sequence of Bacillus cereus ATCC 10987 reveals metabolic adaptations and a large plasmid related to Bacillus anthracis pXO1.</title>
        <authorList>
            <person name="Rasko D.A."/>
            <person name="Ravel J."/>
            <person name="Oekstad O.A."/>
            <person name="Helgason E."/>
            <person name="Cer R.Z."/>
            <person name="Jiang L."/>
            <person name="Shores K.A."/>
            <person name="Fouts D.E."/>
            <person name="Tourasse N.J."/>
            <person name="Angiuoli S.V."/>
            <person name="Kolonay J.F."/>
            <person name="Nelson W.C."/>
            <person name="Kolstoe A.-B."/>
            <person name="Fraser C.M."/>
            <person name="Read T.D."/>
        </authorList>
    </citation>
    <scope>NUCLEOTIDE SEQUENCE [LARGE SCALE GENOMIC DNA]</scope>
    <source>
        <strain>ATCC 10987 / NRS 248</strain>
    </source>
</reference>
<comment type="similarity">
    <text evidence="1">Belongs to the bacterial ribosomal protein bL33 family.</text>
</comment>
<feature type="chain" id="PRO_0000356385" description="Large ribosomal subunit protein bL33B">
    <location>
        <begin position="1"/>
        <end position="49"/>
    </location>
</feature>
<evidence type="ECO:0000255" key="1">
    <source>
        <dbReference type="HAMAP-Rule" id="MF_00294"/>
    </source>
</evidence>